<keyword id="KW-0028">Amino-acid biosynthesis</keyword>
<keyword id="KW-0368">Histidine biosynthesis</keyword>
<keyword id="KW-0378">Hydrolase</keyword>
<keyword id="KW-0486">Methionine biosynthesis</keyword>
<keyword id="KW-0511">Multifunctional enzyme</keyword>
<keyword id="KW-0521">NADP</keyword>
<keyword id="KW-0554">One-carbon metabolism</keyword>
<keyword id="KW-0560">Oxidoreductase</keyword>
<keyword id="KW-0658">Purine biosynthesis</keyword>
<keyword id="KW-1185">Reference proteome</keyword>
<accession>B2KB67</accession>
<comment type="function">
    <text evidence="1">Catalyzes the oxidation of 5,10-methylenetetrahydrofolate to 5,10-methenyltetrahydrofolate and then the hydrolysis of 5,10-methenyltetrahydrofolate to 10-formyltetrahydrofolate.</text>
</comment>
<comment type="catalytic activity">
    <reaction evidence="1">
        <text>(6R)-5,10-methylene-5,6,7,8-tetrahydrofolate + NADP(+) = (6R)-5,10-methenyltetrahydrofolate + NADPH</text>
        <dbReference type="Rhea" id="RHEA:22812"/>
        <dbReference type="ChEBI" id="CHEBI:15636"/>
        <dbReference type="ChEBI" id="CHEBI:57455"/>
        <dbReference type="ChEBI" id="CHEBI:57783"/>
        <dbReference type="ChEBI" id="CHEBI:58349"/>
        <dbReference type="EC" id="1.5.1.5"/>
    </reaction>
</comment>
<comment type="catalytic activity">
    <reaction evidence="1">
        <text>(6R)-5,10-methenyltetrahydrofolate + H2O = (6R)-10-formyltetrahydrofolate + H(+)</text>
        <dbReference type="Rhea" id="RHEA:23700"/>
        <dbReference type="ChEBI" id="CHEBI:15377"/>
        <dbReference type="ChEBI" id="CHEBI:15378"/>
        <dbReference type="ChEBI" id="CHEBI:57455"/>
        <dbReference type="ChEBI" id="CHEBI:195366"/>
        <dbReference type="EC" id="3.5.4.9"/>
    </reaction>
</comment>
<comment type="pathway">
    <text evidence="1">One-carbon metabolism; tetrahydrofolate interconversion.</text>
</comment>
<comment type="subunit">
    <text evidence="1">Homodimer.</text>
</comment>
<comment type="similarity">
    <text evidence="1">Belongs to the tetrahydrofolate dehydrogenase/cyclohydrolase family.</text>
</comment>
<evidence type="ECO:0000255" key="1">
    <source>
        <dbReference type="HAMAP-Rule" id="MF_01576"/>
    </source>
</evidence>
<feature type="chain" id="PRO_1000196769" description="Bifunctional protein FolD">
    <location>
        <begin position="1"/>
        <end position="288"/>
    </location>
</feature>
<feature type="binding site" evidence="1">
    <location>
        <begin position="171"/>
        <end position="173"/>
    </location>
    <ligand>
        <name>NADP(+)</name>
        <dbReference type="ChEBI" id="CHEBI:58349"/>
    </ligand>
</feature>
<feature type="binding site" evidence="1">
    <location>
        <position position="196"/>
    </location>
    <ligand>
        <name>NADP(+)</name>
        <dbReference type="ChEBI" id="CHEBI:58349"/>
    </ligand>
</feature>
<feature type="binding site" evidence="1">
    <location>
        <position position="237"/>
    </location>
    <ligand>
        <name>NADP(+)</name>
        <dbReference type="ChEBI" id="CHEBI:58349"/>
    </ligand>
</feature>
<organism>
    <name type="scientific">Elusimicrobium minutum (strain Pei191)</name>
    <dbReference type="NCBI Taxonomy" id="445932"/>
    <lineage>
        <taxon>Bacteria</taxon>
        <taxon>Pseudomonadati</taxon>
        <taxon>Elusimicrobiota</taxon>
        <taxon>Elusimicrobia</taxon>
        <taxon>Elusimicrobiales</taxon>
        <taxon>Elusimicrobiaceae</taxon>
        <taxon>Elusimicrobium</taxon>
    </lineage>
</organism>
<gene>
    <name evidence="1" type="primary">folD</name>
    <name type="ordered locus">Emin_0264</name>
</gene>
<reference key="1">
    <citation type="journal article" date="2009" name="Appl. Environ. Microbiol.">
        <title>Genomic analysis of 'Elusimicrobium minutum,' the first cultivated representative of the phylum 'Elusimicrobia' (formerly termite group 1).</title>
        <authorList>
            <person name="Herlemann D.P.R."/>
            <person name="Geissinger O."/>
            <person name="Ikeda-Ohtsubo W."/>
            <person name="Kunin V."/>
            <person name="Sun H."/>
            <person name="Lapidus A."/>
            <person name="Hugenholtz P."/>
            <person name="Brune A."/>
        </authorList>
    </citation>
    <scope>NUCLEOTIDE SEQUENCE [LARGE SCALE GENOMIC DNA]</scope>
    <source>
        <strain>Pei191</strain>
    </source>
</reference>
<name>FOLD_ELUMP</name>
<proteinExistence type="inferred from homology"/>
<protein>
    <recommendedName>
        <fullName evidence="1">Bifunctional protein FolD</fullName>
    </recommendedName>
    <domain>
        <recommendedName>
            <fullName evidence="1">Methylenetetrahydrofolate dehydrogenase</fullName>
            <ecNumber evidence="1">1.5.1.5</ecNumber>
        </recommendedName>
    </domain>
    <domain>
        <recommendedName>
            <fullName evidence="1">Methenyltetrahydrofolate cyclohydrolase</fullName>
            <ecNumber evidence="1">3.5.4.9</ecNumber>
        </recommendedName>
    </domain>
</protein>
<dbReference type="EC" id="1.5.1.5" evidence="1"/>
<dbReference type="EC" id="3.5.4.9" evidence="1"/>
<dbReference type="EMBL" id="CP001055">
    <property type="protein sequence ID" value="ACC97826.1"/>
    <property type="molecule type" value="Genomic_DNA"/>
</dbReference>
<dbReference type="RefSeq" id="WP_012414441.1">
    <property type="nucleotide sequence ID" value="NC_010644.1"/>
</dbReference>
<dbReference type="SMR" id="B2KB67"/>
<dbReference type="STRING" id="445932.Emin_0264"/>
<dbReference type="KEGG" id="emi:Emin_0264"/>
<dbReference type="HOGENOM" id="CLU_034045_2_1_0"/>
<dbReference type="UniPathway" id="UPA00193"/>
<dbReference type="Proteomes" id="UP000001029">
    <property type="component" value="Chromosome"/>
</dbReference>
<dbReference type="GO" id="GO:0005829">
    <property type="term" value="C:cytosol"/>
    <property type="evidence" value="ECO:0007669"/>
    <property type="project" value="TreeGrafter"/>
</dbReference>
<dbReference type="GO" id="GO:0004477">
    <property type="term" value="F:methenyltetrahydrofolate cyclohydrolase activity"/>
    <property type="evidence" value="ECO:0007669"/>
    <property type="project" value="UniProtKB-UniRule"/>
</dbReference>
<dbReference type="GO" id="GO:0004488">
    <property type="term" value="F:methylenetetrahydrofolate dehydrogenase (NADP+) activity"/>
    <property type="evidence" value="ECO:0007669"/>
    <property type="project" value="UniProtKB-UniRule"/>
</dbReference>
<dbReference type="GO" id="GO:0000105">
    <property type="term" value="P:L-histidine biosynthetic process"/>
    <property type="evidence" value="ECO:0007669"/>
    <property type="project" value="UniProtKB-KW"/>
</dbReference>
<dbReference type="GO" id="GO:0009086">
    <property type="term" value="P:methionine biosynthetic process"/>
    <property type="evidence" value="ECO:0007669"/>
    <property type="project" value="UniProtKB-KW"/>
</dbReference>
<dbReference type="GO" id="GO:0006164">
    <property type="term" value="P:purine nucleotide biosynthetic process"/>
    <property type="evidence" value="ECO:0007669"/>
    <property type="project" value="UniProtKB-KW"/>
</dbReference>
<dbReference type="GO" id="GO:0035999">
    <property type="term" value="P:tetrahydrofolate interconversion"/>
    <property type="evidence" value="ECO:0007669"/>
    <property type="project" value="UniProtKB-UniRule"/>
</dbReference>
<dbReference type="CDD" id="cd01080">
    <property type="entry name" value="NAD_bind_m-THF_DH_Cyclohyd"/>
    <property type="match status" value="1"/>
</dbReference>
<dbReference type="Gene3D" id="3.40.50.10860">
    <property type="entry name" value="Leucine Dehydrogenase, chain A, domain 1"/>
    <property type="match status" value="1"/>
</dbReference>
<dbReference type="Gene3D" id="3.40.50.720">
    <property type="entry name" value="NAD(P)-binding Rossmann-like Domain"/>
    <property type="match status" value="1"/>
</dbReference>
<dbReference type="HAMAP" id="MF_01576">
    <property type="entry name" value="THF_DHG_CYH"/>
    <property type="match status" value="1"/>
</dbReference>
<dbReference type="InterPro" id="IPR046346">
    <property type="entry name" value="Aminoacid_DH-like_N_sf"/>
</dbReference>
<dbReference type="InterPro" id="IPR036291">
    <property type="entry name" value="NAD(P)-bd_dom_sf"/>
</dbReference>
<dbReference type="InterPro" id="IPR000672">
    <property type="entry name" value="THF_DH/CycHdrlase"/>
</dbReference>
<dbReference type="InterPro" id="IPR020630">
    <property type="entry name" value="THF_DH/CycHdrlase_cat_dom"/>
</dbReference>
<dbReference type="InterPro" id="IPR020631">
    <property type="entry name" value="THF_DH/CycHdrlase_NAD-bd_dom"/>
</dbReference>
<dbReference type="PANTHER" id="PTHR48099:SF5">
    <property type="entry name" value="C-1-TETRAHYDROFOLATE SYNTHASE, CYTOPLASMIC"/>
    <property type="match status" value="1"/>
</dbReference>
<dbReference type="PANTHER" id="PTHR48099">
    <property type="entry name" value="C-1-TETRAHYDROFOLATE SYNTHASE, CYTOPLASMIC-RELATED"/>
    <property type="match status" value="1"/>
</dbReference>
<dbReference type="Pfam" id="PF00763">
    <property type="entry name" value="THF_DHG_CYH"/>
    <property type="match status" value="1"/>
</dbReference>
<dbReference type="Pfam" id="PF02882">
    <property type="entry name" value="THF_DHG_CYH_C"/>
    <property type="match status" value="1"/>
</dbReference>
<dbReference type="PRINTS" id="PR00085">
    <property type="entry name" value="THFDHDRGNASE"/>
</dbReference>
<dbReference type="SUPFAM" id="SSF53223">
    <property type="entry name" value="Aminoacid dehydrogenase-like, N-terminal domain"/>
    <property type="match status" value="1"/>
</dbReference>
<dbReference type="SUPFAM" id="SSF51735">
    <property type="entry name" value="NAD(P)-binding Rossmann-fold domains"/>
    <property type="match status" value="1"/>
</dbReference>
<sequence length="288" mass="30985">MILEGKTLAAAIRENLPARAQICKTKLGRPLKLTGIGWAADYASYVYLDKEIKAAEKTGITGEVIDITEQTSHEEMLNIIKKLSTDETVDAVIVPKPLPRHLNTLEIWEALNPLKDIDGSSVLNMGRLFMCKNWAEVEAMQGFAPATAMAVIKLLDFYKIKLSGVETGVLGRSATVGKPLAHMLSCKDATVKICHSKTPSLTSSLSQCDIVISAIGKAKFVTENMVKTGAMVIDVGTNQDENGVFCGDVDFENVKKITSAITPVPGGVGPVTLACLLENIIISGERKL</sequence>